<protein>
    <recommendedName>
        <fullName evidence="1">Isoprenyl transferase</fullName>
        <ecNumber evidence="1">2.5.1.-</ecNumber>
    </recommendedName>
</protein>
<accession>Q8GLK9</accession>
<evidence type="ECO:0000255" key="1">
    <source>
        <dbReference type="HAMAP-Rule" id="MF_01139"/>
    </source>
</evidence>
<reference key="1">
    <citation type="journal article" date="2003" name="Extremophiles">
        <title>Cloning, expression, and biochemical characterization of 3-deoxy-D-manno-2-octulosonate-8-phosphate (KDO8P) synthase from the hyperthermophilic bacterium Aquifex pyrophilus.</title>
        <authorList>
            <person name="Shulami S."/>
            <person name="Yaniv O."/>
            <person name="Rabkin E."/>
            <person name="Shoham Y."/>
            <person name="Baasov T."/>
        </authorList>
    </citation>
    <scope>NUCLEOTIDE SEQUENCE [GENOMIC DNA]</scope>
</reference>
<sequence length="231" mass="27154">MSLKIPEHVAIIMDGNGRWARKRGLPRIAGHYKGAEVAEDIVEFAIELGIKHLTLFAFSTENWNRPKGEVEALFELLRRYLQTKKDKLYKLGIRVRFIGRRDRINKELVKLMQEIEEESKKFKNLFLNLAVDYGGRDDILRAVKKAVKLQREEITEELFSSLLDLSCSPDPDLLIRTAGEKRISNFLLWNLAYTELYFSETLWPDFSREEFLKALEDFSRRKRKFGRVLDE</sequence>
<proteinExistence type="inferred from homology"/>
<organism>
    <name type="scientific">Aquifex pyrophilus</name>
    <dbReference type="NCBI Taxonomy" id="2714"/>
    <lineage>
        <taxon>Bacteria</taxon>
        <taxon>Pseudomonadati</taxon>
        <taxon>Aquificota</taxon>
        <taxon>Aquificia</taxon>
        <taxon>Aquificales</taxon>
        <taxon>Aquificaceae</taxon>
        <taxon>Aquifex</taxon>
    </lineage>
</organism>
<name>ISPT_AQUPY</name>
<keyword id="KW-0460">Magnesium</keyword>
<keyword id="KW-0479">Metal-binding</keyword>
<keyword id="KW-0808">Transferase</keyword>
<dbReference type="EC" id="2.5.1.-" evidence="1"/>
<dbReference type="EMBL" id="AY135660">
    <property type="protein sequence ID" value="AAN12288.1"/>
    <property type="molecule type" value="Genomic_DNA"/>
</dbReference>
<dbReference type="SMR" id="Q8GLK9"/>
<dbReference type="GO" id="GO:0045547">
    <property type="term" value="F:ditrans,polycis-polyprenyl diphosphate synthase [(2E,6E)-farnesyl diphosphate specific] activity"/>
    <property type="evidence" value="ECO:0007669"/>
    <property type="project" value="TreeGrafter"/>
</dbReference>
<dbReference type="GO" id="GO:0000287">
    <property type="term" value="F:magnesium ion binding"/>
    <property type="evidence" value="ECO:0007669"/>
    <property type="project" value="UniProtKB-UniRule"/>
</dbReference>
<dbReference type="GO" id="GO:0016094">
    <property type="term" value="P:polyprenol biosynthetic process"/>
    <property type="evidence" value="ECO:0007669"/>
    <property type="project" value="TreeGrafter"/>
</dbReference>
<dbReference type="CDD" id="cd00475">
    <property type="entry name" value="Cis_IPPS"/>
    <property type="match status" value="1"/>
</dbReference>
<dbReference type="FunFam" id="3.40.1180.10:FF:000001">
    <property type="entry name" value="(2E,6E)-farnesyl-diphosphate-specific ditrans,polycis-undecaprenyl-diphosphate synthase"/>
    <property type="match status" value="1"/>
</dbReference>
<dbReference type="Gene3D" id="3.40.1180.10">
    <property type="entry name" value="Decaprenyl diphosphate synthase-like"/>
    <property type="match status" value="1"/>
</dbReference>
<dbReference type="HAMAP" id="MF_01139">
    <property type="entry name" value="ISPT"/>
    <property type="match status" value="1"/>
</dbReference>
<dbReference type="InterPro" id="IPR001441">
    <property type="entry name" value="UPP_synth-like"/>
</dbReference>
<dbReference type="InterPro" id="IPR018520">
    <property type="entry name" value="UPP_synth-like_CS"/>
</dbReference>
<dbReference type="InterPro" id="IPR036424">
    <property type="entry name" value="UPP_synth-like_sf"/>
</dbReference>
<dbReference type="NCBIfam" id="TIGR00055">
    <property type="entry name" value="uppS"/>
    <property type="match status" value="1"/>
</dbReference>
<dbReference type="PANTHER" id="PTHR10291:SF0">
    <property type="entry name" value="DEHYDRODOLICHYL DIPHOSPHATE SYNTHASE 2"/>
    <property type="match status" value="1"/>
</dbReference>
<dbReference type="PANTHER" id="PTHR10291">
    <property type="entry name" value="DEHYDRODOLICHYL DIPHOSPHATE SYNTHASE FAMILY MEMBER"/>
    <property type="match status" value="1"/>
</dbReference>
<dbReference type="Pfam" id="PF01255">
    <property type="entry name" value="Prenyltransf"/>
    <property type="match status" value="1"/>
</dbReference>
<dbReference type="SUPFAM" id="SSF64005">
    <property type="entry name" value="Undecaprenyl diphosphate synthase"/>
    <property type="match status" value="1"/>
</dbReference>
<dbReference type="PROSITE" id="PS01066">
    <property type="entry name" value="UPP_SYNTHASE"/>
    <property type="match status" value="1"/>
</dbReference>
<comment type="function">
    <text evidence="1">Catalyzes the condensation of isopentenyl diphosphate (IPP) with allylic pyrophosphates generating different type of terpenoids.</text>
</comment>
<comment type="cofactor">
    <cofactor evidence="1">
        <name>Mg(2+)</name>
        <dbReference type="ChEBI" id="CHEBI:18420"/>
    </cofactor>
    <text evidence="1">Binds 2 magnesium ions per subunit.</text>
</comment>
<comment type="subunit">
    <text evidence="1">Homodimer.</text>
</comment>
<comment type="similarity">
    <text evidence="1">Belongs to the UPP synthase family.</text>
</comment>
<feature type="chain" id="PRO_0000123565" description="Isoprenyl transferase">
    <location>
        <begin position="1"/>
        <end position="231"/>
    </location>
</feature>
<feature type="active site" evidence="1">
    <location>
        <position position="14"/>
    </location>
</feature>
<feature type="active site" description="Proton acceptor" evidence="1">
    <location>
        <position position="62"/>
    </location>
</feature>
<feature type="binding site" evidence="1">
    <location>
        <position position="14"/>
    </location>
    <ligand>
        <name>Mg(2+)</name>
        <dbReference type="ChEBI" id="CHEBI:18420"/>
    </ligand>
</feature>
<feature type="binding site" evidence="1">
    <location>
        <begin position="15"/>
        <end position="18"/>
    </location>
    <ligand>
        <name>substrate</name>
    </ligand>
</feature>
<feature type="binding site" evidence="1">
    <location>
        <position position="19"/>
    </location>
    <ligand>
        <name>substrate</name>
    </ligand>
</feature>
<feature type="binding site" evidence="1">
    <location>
        <position position="27"/>
    </location>
    <ligand>
        <name>substrate</name>
    </ligand>
</feature>
<feature type="binding site" evidence="1">
    <location>
        <position position="31"/>
    </location>
    <ligand>
        <name>substrate</name>
    </ligand>
</feature>
<feature type="binding site" evidence="1">
    <location>
        <begin position="59"/>
        <end position="61"/>
    </location>
    <ligand>
        <name>substrate</name>
    </ligand>
</feature>
<feature type="binding site" evidence="1">
    <location>
        <position position="63"/>
    </location>
    <ligand>
        <name>substrate</name>
    </ligand>
</feature>
<feature type="binding site" evidence="1">
    <location>
        <position position="65"/>
    </location>
    <ligand>
        <name>substrate</name>
    </ligand>
</feature>
<feature type="binding site" evidence="1">
    <location>
        <position position="176"/>
    </location>
    <ligand>
        <name>substrate</name>
    </ligand>
</feature>
<feature type="binding site" evidence="1">
    <location>
        <begin position="182"/>
        <end position="184"/>
    </location>
    <ligand>
        <name>substrate</name>
    </ligand>
</feature>
<feature type="binding site" evidence="1">
    <location>
        <position position="195"/>
    </location>
    <ligand>
        <name>Mg(2+)</name>
        <dbReference type="ChEBI" id="CHEBI:18420"/>
    </ligand>
</feature>
<gene>
    <name evidence="1" type="primary">uppS</name>
</gene>